<feature type="signal peptide" evidence="1">
    <location>
        <begin position="1"/>
        <end position="20"/>
    </location>
</feature>
<feature type="chain" id="PRO_5003054193" description="Uncharacterized secreted protein ARB_06907">
    <location>
        <begin position="21"/>
        <end position="930"/>
    </location>
</feature>
<feature type="glycosylation site" description="N-linked (GlcNAc...) asparagine" evidence="2">
    <location>
        <position position="137"/>
    </location>
</feature>
<feature type="glycosylation site" description="N-linked (GlcNAc...) asparagine" evidence="2">
    <location>
        <position position="146"/>
    </location>
</feature>
<feature type="glycosylation site" description="N-linked (GlcNAc...) asparagine" evidence="2">
    <location>
        <position position="164"/>
    </location>
</feature>
<feature type="glycosylation site" description="N-linked (GlcNAc...) asparagine" evidence="2">
    <location>
        <position position="210"/>
    </location>
</feature>
<feature type="glycosylation site" description="N-linked (GlcNAc...) asparagine" evidence="2">
    <location>
        <position position="257"/>
    </location>
</feature>
<feature type="glycosylation site" description="N-linked (GlcNAc...) asparagine" evidence="2">
    <location>
        <position position="628"/>
    </location>
</feature>
<feature type="glycosylation site" description="N-linked (GlcNAc...) asparagine" evidence="2">
    <location>
        <position position="717"/>
    </location>
</feature>
<feature type="glycosylation site" description="N-linked (GlcNAc...) asparagine" evidence="2">
    <location>
        <position position="799"/>
    </location>
</feature>
<sequence length="930" mass="102354">MPSFVLWTFHLCSQWFQGLTDLLPHIPDTQTVNNFASQTGLLYPGGMKYSKIASWVCIPLLTCRGVDATNSADGGSELQLNESPFSKNWQVLGPFEIGTRESSWGADPLEAYGGFQTLQYDPKASFDSSLALNGLANWSMASTHVNSTANPPETILDINLSPDNLTSLQEVYGWDAKQYQAWARGTLTVSKSNSVVALYTDRIWEYRIDNKSYFGGDFFGFRRAPLLLDLSPGTHTVDLRVVRDVRALGAVGEPFINVTLIAQELSKTLIVDKKSILVADVVENRLISPHASVTLHNTMGNPVDVAARFSLKMLNNNVKLEEAQSRAIGFTIEAKDKINVPSSVSLYFEYTTPDDSSVQRTQTMTITFTRRKLPEVQQNTFMLPGGVVSYATMRPPTSLECNKDKSAKLPVLLGLHGAGQAASDEIIRTMLDGVSDICAWTLFPSGVTPWSGDDWHTWGFADLQHSVRALNDYIKYSGWTGVGLIDGDWIIAGHSNGGQGTWYTISHYPDKIIAAAPVAGYTSIENYVPYSMWHNTDSLLASTFYRARQDFKHEILVDNFAGIPVYQQHGASDDNVVVYHSRLMHRLLQESGSPSKYHEVPGKNHWYTGIMTSDFLKDFYRTYVQRPNATDLLPQRFSVTLPPAGHMGTRGGIYVDQSHTPDRVGSIEVERGMANDGVWKLKTRNIRRFHLETSAIRSHVPLYIQIDGSRFTVTPSNSTTTWYTQDAAGKWTSGGDSWRTISQRYGRQAGVNAFLRTEAPFTVTAAAQETRDLALQTCRNLFQYLSADCIISYAVPTANSTTATSPAGNNVVILLGAQPNGYTAGDSAISISARSLDIKTSQGTTSYPFEPGLGAIFIRPLVNERLELVIWGSDMAGLQQAARLVPVLTGVGQPDFVVVNKGTPLKGQGSLYAAGFFDSEWKVSAASYVS</sequence>
<reference key="1">
    <citation type="journal article" date="2011" name="Genome Biol.">
        <title>Comparative and functional genomics provide insights into the pathogenicity of dermatophytic fungi.</title>
        <authorList>
            <person name="Burmester A."/>
            <person name="Shelest E."/>
            <person name="Gloeckner G."/>
            <person name="Heddergott C."/>
            <person name="Schindler S."/>
            <person name="Staib P."/>
            <person name="Heidel A."/>
            <person name="Felder M."/>
            <person name="Petzold A."/>
            <person name="Szafranski K."/>
            <person name="Feuermann M."/>
            <person name="Pedruzzi I."/>
            <person name="Priebe S."/>
            <person name="Groth M."/>
            <person name="Winkler R."/>
            <person name="Li W."/>
            <person name="Kniemeyer O."/>
            <person name="Schroeckh V."/>
            <person name="Hertweck C."/>
            <person name="Hube B."/>
            <person name="White T.C."/>
            <person name="Platzer M."/>
            <person name="Guthke R."/>
            <person name="Heitman J."/>
            <person name="Woestemeyer J."/>
            <person name="Zipfel P.F."/>
            <person name="Monod M."/>
            <person name="Brakhage A.A."/>
        </authorList>
    </citation>
    <scope>NUCLEOTIDE SEQUENCE [LARGE SCALE GENOMIC DNA]</scope>
    <scope>IDENTIFICATION BY MASS SPECTROMETRY</scope>
    <scope>SUBCELLULAR LOCATION</scope>
    <source>
        <strain>ATCC MYA-4681 / CBS 112371</strain>
    </source>
</reference>
<reference key="2">
    <citation type="journal article" date="2011" name="Proteomics">
        <title>Identification of novel secreted proteases during extracellular proteolysis by dermatophytes at acidic pH.</title>
        <authorList>
            <person name="Sriranganadane D."/>
            <person name="Waridel P."/>
            <person name="Salamin K."/>
            <person name="Feuermann M."/>
            <person name="Mignon B."/>
            <person name="Staib P."/>
            <person name="Neuhaus J.M."/>
            <person name="Quadroni M."/>
            <person name="Monod M."/>
        </authorList>
    </citation>
    <scope>IDENTIFICATION BY MASS SPECTROMETRY</scope>
    <scope>SUBCELLULAR LOCATION</scope>
</reference>
<gene>
    <name type="ORF">ARB_06907</name>
</gene>
<evidence type="ECO:0000255" key="1"/>
<evidence type="ECO:0000255" key="2">
    <source>
        <dbReference type="PROSITE-ProRule" id="PRU00498"/>
    </source>
</evidence>
<evidence type="ECO:0000269" key="3">
    <source>
    </source>
</evidence>
<evidence type="ECO:0000269" key="4">
    <source>
    </source>
</evidence>
<evidence type="ECO:0000305" key="5"/>
<protein>
    <recommendedName>
        <fullName>Uncharacterized secreted protein ARB_06907</fullName>
    </recommendedName>
</protein>
<name>A6907_ARTBC</name>
<dbReference type="EMBL" id="ABSU01000006">
    <property type="protein sequence ID" value="EFE34506.1"/>
    <property type="status" value="ALT_INIT"/>
    <property type="molecule type" value="Genomic_DNA"/>
</dbReference>
<dbReference type="RefSeq" id="XP_003015146.1">
    <property type="nucleotide sequence ID" value="XM_003015100.1"/>
</dbReference>
<dbReference type="ESTHER" id="artbc-a6907">
    <property type="family name" value="AlphaBeta_hydrolase"/>
</dbReference>
<dbReference type="GeneID" id="9520870"/>
<dbReference type="KEGG" id="abe:ARB_06907"/>
<dbReference type="eggNOG" id="ENOG502QS8J">
    <property type="taxonomic scope" value="Eukaryota"/>
</dbReference>
<dbReference type="HOGENOM" id="CLU_014627_1_0_1"/>
<dbReference type="OrthoDB" id="449091at2759"/>
<dbReference type="Proteomes" id="UP000008866">
    <property type="component" value="Unassembled WGS sequence"/>
</dbReference>
<dbReference type="GO" id="GO:0005576">
    <property type="term" value="C:extracellular region"/>
    <property type="evidence" value="ECO:0007669"/>
    <property type="project" value="UniProtKB-SubCell"/>
</dbReference>
<dbReference type="GO" id="GO:0008236">
    <property type="term" value="F:serine-type peptidase activity"/>
    <property type="evidence" value="ECO:0007669"/>
    <property type="project" value="InterPro"/>
</dbReference>
<dbReference type="GO" id="GO:0006508">
    <property type="term" value="P:proteolysis"/>
    <property type="evidence" value="ECO:0007669"/>
    <property type="project" value="InterPro"/>
</dbReference>
<dbReference type="Gene3D" id="3.40.50.1820">
    <property type="entry name" value="alpha/beta hydrolase"/>
    <property type="match status" value="1"/>
</dbReference>
<dbReference type="InterPro" id="IPR029058">
    <property type="entry name" value="AB_hydrolase_fold"/>
</dbReference>
<dbReference type="InterPro" id="IPR001375">
    <property type="entry name" value="Peptidase_S9_cat"/>
</dbReference>
<dbReference type="InterPro" id="IPR050955">
    <property type="entry name" value="Plant_Biomass_Hydrol_Est"/>
</dbReference>
<dbReference type="PANTHER" id="PTHR43037:SF4">
    <property type="entry name" value="PEPTIDASE S9 PROLYL OLIGOPEPTIDASE CATALYTIC DOMAIN-CONTAINING PROTEIN"/>
    <property type="match status" value="1"/>
</dbReference>
<dbReference type="PANTHER" id="PTHR43037">
    <property type="entry name" value="UNNAMED PRODUCT-RELATED"/>
    <property type="match status" value="1"/>
</dbReference>
<dbReference type="Pfam" id="PF00326">
    <property type="entry name" value="Peptidase_S9"/>
    <property type="match status" value="1"/>
</dbReference>
<dbReference type="SUPFAM" id="SSF53474">
    <property type="entry name" value="alpha/beta-Hydrolases"/>
    <property type="match status" value="1"/>
</dbReference>
<keyword id="KW-0325">Glycoprotein</keyword>
<keyword id="KW-1185">Reference proteome</keyword>
<keyword id="KW-0964">Secreted</keyword>
<keyword id="KW-0732">Signal</keyword>
<comment type="subcellular location">
    <subcellularLocation>
        <location evidence="3 4">Secreted</location>
    </subcellularLocation>
</comment>
<comment type="sequence caution" evidence="5">
    <conflict type="erroneous initiation">
        <sequence resource="EMBL-CDS" id="EFE34506"/>
    </conflict>
    <text>Extended N-terminus.</text>
</comment>
<accession>D4AR77</accession>
<proteinExistence type="evidence at protein level"/>
<organism>
    <name type="scientific">Arthroderma benhamiae (strain ATCC MYA-4681 / CBS 112371)</name>
    <name type="common">Trichophyton mentagrophytes</name>
    <dbReference type="NCBI Taxonomy" id="663331"/>
    <lineage>
        <taxon>Eukaryota</taxon>
        <taxon>Fungi</taxon>
        <taxon>Dikarya</taxon>
        <taxon>Ascomycota</taxon>
        <taxon>Pezizomycotina</taxon>
        <taxon>Eurotiomycetes</taxon>
        <taxon>Eurotiomycetidae</taxon>
        <taxon>Onygenales</taxon>
        <taxon>Arthrodermataceae</taxon>
        <taxon>Trichophyton</taxon>
    </lineage>
</organism>